<accession>A5CCK2</accession>
<gene>
    <name evidence="1" type="primary">rplN</name>
    <name type="ordered locus">OTBS_0366</name>
</gene>
<feature type="chain" id="PRO_0000355830" description="Large ribosomal subunit protein uL14">
    <location>
        <begin position="1"/>
        <end position="122"/>
    </location>
</feature>
<dbReference type="EMBL" id="AM494475">
    <property type="protein sequence ID" value="CAM79432.1"/>
    <property type="molecule type" value="Genomic_DNA"/>
</dbReference>
<dbReference type="RefSeq" id="WP_011944430.1">
    <property type="nucleotide sequence ID" value="NC_009488.1"/>
</dbReference>
<dbReference type="SMR" id="A5CCK2"/>
<dbReference type="KEGG" id="ots:OTBS_0366"/>
<dbReference type="eggNOG" id="COG0093">
    <property type="taxonomic scope" value="Bacteria"/>
</dbReference>
<dbReference type="HOGENOM" id="CLU_095071_2_1_5"/>
<dbReference type="Proteomes" id="UP000001565">
    <property type="component" value="Chromosome"/>
</dbReference>
<dbReference type="GO" id="GO:0022625">
    <property type="term" value="C:cytosolic large ribosomal subunit"/>
    <property type="evidence" value="ECO:0007669"/>
    <property type="project" value="TreeGrafter"/>
</dbReference>
<dbReference type="GO" id="GO:0070180">
    <property type="term" value="F:large ribosomal subunit rRNA binding"/>
    <property type="evidence" value="ECO:0007669"/>
    <property type="project" value="TreeGrafter"/>
</dbReference>
<dbReference type="GO" id="GO:0003735">
    <property type="term" value="F:structural constituent of ribosome"/>
    <property type="evidence" value="ECO:0007669"/>
    <property type="project" value="InterPro"/>
</dbReference>
<dbReference type="GO" id="GO:0006412">
    <property type="term" value="P:translation"/>
    <property type="evidence" value="ECO:0007669"/>
    <property type="project" value="UniProtKB-UniRule"/>
</dbReference>
<dbReference type="CDD" id="cd00337">
    <property type="entry name" value="Ribosomal_uL14"/>
    <property type="match status" value="1"/>
</dbReference>
<dbReference type="Gene3D" id="2.40.150.20">
    <property type="entry name" value="Ribosomal protein L14"/>
    <property type="match status" value="1"/>
</dbReference>
<dbReference type="HAMAP" id="MF_01367">
    <property type="entry name" value="Ribosomal_uL14"/>
    <property type="match status" value="1"/>
</dbReference>
<dbReference type="InterPro" id="IPR000218">
    <property type="entry name" value="Ribosomal_uL14"/>
</dbReference>
<dbReference type="InterPro" id="IPR005745">
    <property type="entry name" value="Ribosomal_uL14_bac-type"/>
</dbReference>
<dbReference type="InterPro" id="IPR019972">
    <property type="entry name" value="Ribosomal_uL14_CS"/>
</dbReference>
<dbReference type="InterPro" id="IPR036853">
    <property type="entry name" value="Ribosomal_uL14_sf"/>
</dbReference>
<dbReference type="NCBIfam" id="TIGR01067">
    <property type="entry name" value="rplN_bact"/>
    <property type="match status" value="1"/>
</dbReference>
<dbReference type="PANTHER" id="PTHR11761">
    <property type="entry name" value="50S/60S RIBOSOMAL PROTEIN L14/L23"/>
    <property type="match status" value="1"/>
</dbReference>
<dbReference type="PANTHER" id="PTHR11761:SF3">
    <property type="entry name" value="LARGE RIBOSOMAL SUBUNIT PROTEIN UL14M"/>
    <property type="match status" value="1"/>
</dbReference>
<dbReference type="Pfam" id="PF00238">
    <property type="entry name" value="Ribosomal_L14"/>
    <property type="match status" value="1"/>
</dbReference>
<dbReference type="SMART" id="SM01374">
    <property type="entry name" value="Ribosomal_L14"/>
    <property type="match status" value="1"/>
</dbReference>
<dbReference type="SUPFAM" id="SSF50193">
    <property type="entry name" value="Ribosomal protein L14"/>
    <property type="match status" value="1"/>
</dbReference>
<dbReference type="PROSITE" id="PS00049">
    <property type="entry name" value="RIBOSOMAL_L14"/>
    <property type="match status" value="1"/>
</dbReference>
<evidence type="ECO:0000255" key="1">
    <source>
        <dbReference type="HAMAP-Rule" id="MF_01367"/>
    </source>
</evidence>
<evidence type="ECO:0000305" key="2"/>
<sequence>MIQMQTILNVADNSGAKKVMCIKVLGGTHHMIAHLGDVIVVSIKSSIPKGKVKKGEVCKALIIRTKCGVTRSDGSNIKFDSNDVVLLNKQGEPFGTRIFGSVPRELRVKKFSKIVSLAEEVL</sequence>
<organism>
    <name type="scientific">Orientia tsutsugamushi (strain Boryong)</name>
    <name type="common">Rickettsia tsutsugamushi</name>
    <dbReference type="NCBI Taxonomy" id="357244"/>
    <lineage>
        <taxon>Bacteria</taxon>
        <taxon>Pseudomonadati</taxon>
        <taxon>Pseudomonadota</taxon>
        <taxon>Alphaproteobacteria</taxon>
        <taxon>Rickettsiales</taxon>
        <taxon>Rickettsiaceae</taxon>
        <taxon>Rickettsieae</taxon>
        <taxon>Orientia</taxon>
    </lineage>
</organism>
<protein>
    <recommendedName>
        <fullName evidence="1">Large ribosomal subunit protein uL14</fullName>
    </recommendedName>
    <alternativeName>
        <fullName evidence="2">50S ribosomal protein L14</fullName>
    </alternativeName>
</protein>
<keyword id="KW-1185">Reference proteome</keyword>
<keyword id="KW-0687">Ribonucleoprotein</keyword>
<keyword id="KW-0689">Ribosomal protein</keyword>
<keyword id="KW-0694">RNA-binding</keyword>
<keyword id="KW-0699">rRNA-binding</keyword>
<name>RL14_ORITB</name>
<reference key="1">
    <citation type="journal article" date="2007" name="Proc. Natl. Acad. Sci. U.S.A.">
        <title>The Orientia tsutsugamushi genome reveals massive proliferation of conjugative type IV secretion system and host-cell interaction genes.</title>
        <authorList>
            <person name="Cho N.-H."/>
            <person name="Kim H.-R."/>
            <person name="Lee J.-H."/>
            <person name="Kim S.-Y."/>
            <person name="Kim J."/>
            <person name="Cha S."/>
            <person name="Kim S.-Y."/>
            <person name="Darby A.C."/>
            <person name="Fuxelius H.-H."/>
            <person name="Yin J."/>
            <person name="Kim J.H."/>
            <person name="Kim J."/>
            <person name="Lee S.J."/>
            <person name="Koh Y.-S."/>
            <person name="Jang W.-J."/>
            <person name="Park K.-H."/>
            <person name="Andersson S.G.E."/>
            <person name="Choi M.-S."/>
            <person name="Kim I.-S."/>
        </authorList>
    </citation>
    <scope>NUCLEOTIDE SEQUENCE [LARGE SCALE GENOMIC DNA]</scope>
    <source>
        <strain>Boryong</strain>
    </source>
</reference>
<comment type="function">
    <text evidence="1">Binds to 23S rRNA. Forms part of two intersubunit bridges in the 70S ribosome.</text>
</comment>
<comment type="subunit">
    <text evidence="1">Part of the 50S ribosomal subunit. Forms a cluster with proteins L3 and L19. In the 70S ribosome, L14 and L19 interact and together make contacts with the 16S rRNA in bridges B5 and B8.</text>
</comment>
<comment type="similarity">
    <text evidence="1">Belongs to the universal ribosomal protein uL14 family.</text>
</comment>
<proteinExistence type="inferred from homology"/>